<keyword id="KW-0963">Cytoplasm</keyword>
<keyword id="KW-0378">Hydrolase</keyword>
<keyword id="KW-0694">RNA-binding</keyword>
<keyword id="KW-0820">tRNA-binding</keyword>
<evidence type="ECO:0000255" key="1">
    <source>
        <dbReference type="HAMAP-Rule" id="MF_00518"/>
    </source>
</evidence>
<feature type="chain" id="PRO_1000050885" description="D-aminoacyl-tRNA deacylase">
    <location>
        <begin position="1"/>
        <end position="145"/>
    </location>
</feature>
<feature type="short sequence motif" description="Gly-cisPro motif, important for rejection of L-amino acids" evidence="1">
    <location>
        <begin position="137"/>
        <end position="138"/>
    </location>
</feature>
<comment type="function">
    <text evidence="1">An aminoacyl-tRNA editing enzyme that deacylates mischarged D-aminoacyl-tRNAs. Also deacylates mischarged glycyl-tRNA(Ala), protecting cells against glycine mischarging by AlaRS. Acts via tRNA-based rather than protein-based catalysis; rejects L-amino acids rather than detecting D-amino acids in the active site. By recycling D-aminoacyl-tRNA to D-amino acids and free tRNA molecules, this enzyme counteracts the toxicity associated with the formation of D-aminoacyl-tRNA entities in vivo and helps enforce protein L-homochirality.</text>
</comment>
<comment type="catalytic activity">
    <reaction evidence="1">
        <text>glycyl-tRNA(Ala) + H2O = tRNA(Ala) + glycine + H(+)</text>
        <dbReference type="Rhea" id="RHEA:53744"/>
        <dbReference type="Rhea" id="RHEA-COMP:9657"/>
        <dbReference type="Rhea" id="RHEA-COMP:13640"/>
        <dbReference type="ChEBI" id="CHEBI:15377"/>
        <dbReference type="ChEBI" id="CHEBI:15378"/>
        <dbReference type="ChEBI" id="CHEBI:57305"/>
        <dbReference type="ChEBI" id="CHEBI:78442"/>
        <dbReference type="ChEBI" id="CHEBI:78522"/>
        <dbReference type="EC" id="3.1.1.96"/>
    </reaction>
</comment>
<comment type="catalytic activity">
    <reaction evidence="1">
        <text>a D-aminoacyl-tRNA + H2O = a tRNA + a D-alpha-amino acid + H(+)</text>
        <dbReference type="Rhea" id="RHEA:13953"/>
        <dbReference type="Rhea" id="RHEA-COMP:10123"/>
        <dbReference type="Rhea" id="RHEA-COMP:10124"/>
        <dbReference type="ChEBI" id="CHEBI:15377"/>
        <dbReference type="ChEBI" id="CHEBI:15378"/>
        <dbReference type="ChEBI" id="CHEBI:59871"/>
        <dbReference type="ChEBI" id="CHEBI:78442"/>
        <dbReference type="ChEBI" id="CHEBI:79333"/>
        <dbReference type="EC" id="3.1.1.96"/>
    </reaction>
</comment>
<comment type="subunit">
    <text evidence="1">Homodimer.</text>
</comment>
<comment type="subcellular location">
    <subcellularLocation>
        <location evidence="1">Cytoplasm</location>
    </subcellularLocation>
</comment>
<comment type="domain">
    <text evidence="1">A Gly-cisPro motif from one monomer fits into the active site of the other monomer to allow specific chiral rejection of L-amino acids.</text>
</comment>
<comment type="similarity">
    <text evidence="1">Belongs to the DTD family.</text>
</comment>
<organism>
    <name type="scientific">Shewanella putrefaciens (strain CN-32 / ATCC BAA-453)</name>
    <dbReference type="NCBI Taxonomy" id="319224"/>
    <lineage>
        <taxon>Bacteria</taxon>
        <taxon>Pseudomonadati</taxon>
        <taxon>Pseudomonadota</taxon>
        <taxon>Gammaproteobacteria</taxon>
        <taxon>Alteromonadales</taxon>
        <taxon>Shewanellaceae</taxon>
        <taxon>Shewanella</taxon>
    </lineage>
</organism>
<reference key="1">
    <citation type="submission" date="2007-04" db="EMBL/GenBank/DDBJ databases">
        <title>Complete sequence of Shewanella putrefaciens CN-32.</title>
        <authorList>
            <consortium name="US DOE Joint Genome Institute"/>
            <person name="Copeland A."/>
            <person name="Lucas S."/>
            <person name="Lapidus A."/>
            <person name="Barry K."/>
            <person name="Detter J.C."/>
            <person name="Glavina del Rio T."/>
            <person name="Hammon N."/>
            <person name="Israni S."/>
            <person name="Dalin E."/>
            <person name="Tice H."/>
            <person name="Pitluck S."/>
            <person name="Chain P."/>
            <person name="Malfatti S."/>
            <person name="Shin M."/>
            <person name="Vergez L."/>
            <person name="Schmutz J."/>
            <person name="Larimer F."/>
            <person name="Land M."/>
            <person name="Hauser L."/>
            <person name="Kyrpides N."/>
            <person name="Mikhailova N."/>
            <person name="Romine M.F."/>
            <person name="Fredrickson J."/>
            <person name="Tiedje J."/>
            <person name="Richardson P."/>
        </authorList>
    </citation>
    <scope>NUCLEOTIDE SEQUENCE [LARGE SCALE GENOMIC DNA]</scope>
    <source>
        <strain>CN-32 / ATCC BAA-453</strain>
    </source>
</reference>
<protein>
    <recommendedName>
        <fullName evidence="1">D-aminoacyl-tRNA deacylase</fullName>
        <shortName evidence="1">DTD</shortName>
        <ecNumber evidence="1">3.1.1.96</ecNumber>
    </recommendedName>
    <alternativeName>
        <fullName evidence="1">Gly-tRNA(Ala) deacylase</fullName>
    </alternativeName>
</protein>
<sequence length="145" mass="15734">MIALIQRVSRASVVVDNQTLGSIDKGLLVLLGVEREDNREKMEKLATKVMSYRVFSDENGKMNLNLEQVGGSLLVVSQFTLAADTGRGLRPSFSGAGTPDQALTLYEEFVAFCRDKGVTTETGQFGADMQVSLVNDGPVTFNLQV</sequence>
<accession>A4Y2G8</accession>
<gene>
    <name evidence="1" type="primary">dtd</name>
    <name type="ordered locus">Sputcn32_0419</name>
</gene>
<name>DTD_SHEPC</name>
<proteinExistence type="inferred from homology"/>
<dbReference type="EC" id="3.1.1.96" evidence="1"/>
<dbReference type="EMBL" id="CP000681">
    <property type="protein sequence ID" value="ABP74151.1"/>
    <property type="molecule type" value="Genomic_DNA"/>
</dbReference>
<dbReference type="SMR" id="A4Y2G8"/>
<dbReference type="STRING" id="319224.Sputcn32_0419"/>
<dbReference type="KEGG" id="spc:Sputcn32_0419"/>
<dbReference type="eggNOG" id="COG1490">
    <property type="taxonomic scope" value="Bacteria"/>
</dbReference>
<dbReference type="HOGENOM" id="CLU_076901_1_0_6"/>
<dbReference type="GO" id="GO:0005737">
    <property type="term" value="C:cytoplasm"/>
    <property type="evidence" value="ECO:0007669"/>
    <property type="project" value="UniProtKB-SubCell"/>
</dbReference>
<dbReference type="GO" id="GO:0051500">
    <property type="term" value="F:D-tyrosyl-tRNA(Tyr) deacylase activity"/>
    <property type="evidence" value="ECO:0007669"/>
    <property type="project" value="TreeGrafter"/>
</dbReference>
<dbReference type="GO" id="GO:0106026">
    <property type="term" value="F:Gly-tRNA(Ala) deacylase activity"/>
    <property type="evidence" value="ECO:0007669"/>
    <property type="project" value="UniProtKB-UniRule"/>
</dbReference>
<dbReference type="GO" id="GO:0043908">
    <property type="term" value="F:Ser(Gly)-tRNA(Ala) hydrolase activity"/>
    <property type="evidence" value="ECO:0007669"/>
    <property type="project" value="UniProtKB-UniRule"/>
</dbReference>
<dbReference type="GO" id="GO:0000049">
    <property type="term" value="F:tRNA binding"/>
    <property type="evidence" value="ECO:0007669"/>
    <property type="project" value="UniProtKB-UniRule"/>
</dbReference>
<dbReference type="GO" id="GO:0019478">
    <property type="term" value="P:D-amino acid catabolic process"/>
    <property type="evidence" value="ECO:0007669"/>
    <property type="project" value="UniProtKB-UniRule"/>
</dbReference>
<dbReference type="CDD" id="cd00563">
    <property type="entry name" value="Dtyr_deacylase"/>
    <property type="match status" value="1"/>
</dbReference>
<dbReference type="FunFam" id="3.50.80.10:FF:000001">
    <property type="entry name" value="D-aminoacyl-tRNA deacylase"/>
    <property type="match status" value="1"/>
</dbReference>
<dbReference type="Gene3D" id="3.50.80.10">
    <property type="entry name" value="D-tyrosyl-tRNA(Tyr) deacylase"/>
    <property type="match status" value="1"/>
</dbReference>
<dbReference type="HAMAP" id="MF_00518">
    <property type="entry name" value="Deacylase_Dtd"/>
    <property type="match status" value="1"/>
</dbReference>
<dbReference type="InterPro" id="IPR003732">
    <property type="entry name" value="Daa-tRNA_deacyls_DTD"/>
</dbReference>
<dbReference type="InterPro" id="IPR023509">
    <property type="entry name" value="DTD-like_sf"/>
</dbReference>
<dbReference type="NCBIfam" id="TIGR00256">
    <property type="entry name" value="D-aminoacyl-tRNA deacylase"/>
    <property type="match status" value="1"/>
</dbReference>
<dbReference type="PANTHER" id="PTHR10472:SF5">
    <property type="entry name" value="D-AMINOACYL-TRNA DEACYLASE 1"/>
    <property type="match status" value="1"/>
</dbReference>
<dbReference type="PANTHER" id="PTHR10472">
    <property type="entry name" value="D-TYROSYL-TRNA TYR DEACYLASE"/>
    <property type="match status" value="1"/>
</dbReference>
<dbReference type="Pfam" id="PF02580">
    <property type="entry name" value="Tyr_Deacylase"/>
    <property type="match status" value="1"/>
</dbReference>
<dbReference type="SUPFAM" id="SSF69500">
    <property type="entry name" value="DTD-like"/>
    <property type="match status" value="1"/>
</dbReference>